<name>KU80_COCIM</name>
<dbReference type="EC" id="3.6.4.12"/>
<dbReference type="EMBL" id="GG704911">
    <property type="protein sequence ID" value="EAS36450.3"/>
    <property type="status" value="ALT_SEQ"/>
    <property type="molecule type" value="Genomic_DNA"/>
</dbReference>
<dbReference type="RefSeq" id="XP_001248033.2">
    <property type="nucleotide sequence ID" value="XM_001248032.2"/>
</dbReference>
<dbReference type="SMR" id="Q1E6K9"/>
<dbReference type="FunCoup" id="Q1E6K9">
    <property type="interactions" value="126"/>
</dbReference>
<dbReference type="STRING" id="246410.Q1E6K9"/>
<dbReference type="GeneID" id="4566627"/>
<dbReference type="KEGG" id="cim:CIMG_01804"/>
<dbReference type="InParanoid" id="Q1E6K9"/>
<dbReference type="OrthoDB" id="30826at2759"/>
<dbReference type="Proteomes" id="UP000001261">
    <property type="component" value="Unassembled WGS sequence"/>
</dbReference>
<dbReference type="GO" id="GO:0000781">
    <property type="term" value="C:chromosome, telomeric region"/>
    <property type="evidence" value="ECO:0007669"/>
    <property type="project" value="UniProtKB-SubCell"/>
</dbReference>
<dbReference type="GO" id="GO:0043564">
    <property type="term" value="C:Ku70:Ku80 complex"/>
    <property type="evidence" value="ECO:0007669"/>
    <property type="project" value="InterPro"/>
</dbReference>
<dbReference type="GO" id="GO:0005524">
    <property type="term" value="F:ATP binding"/>
    <property type="evidence" value="ECO:0007669"/>
    <property type="project" value="UniProtKB-KW"/>
</dbReference>
<dbReference type="GO" id="GO:0016887">
    <property type="term" value="F:ATP hydrolysis activity"/>
    <property type="evidence" value="ECO:0007669"/>
    <property type="project" value="RHEA"/>
</dbReference>
<dbReference type="GO" id="GO:0003684">
    <property type="term" value="F:damaged DNA binding"/>
    <property type="evidence" value="ECO:0007669"/>
    <property type="project" value="InterPro"/>
</dbReference>
<dbReference type="GO" id="GO:0003690">
    <property type="term" value="F:double-stranded DNA binding"/>
    <property type="evidence" value="ECO:0007669"/>
    <property type="project" value="TreeGrafter"/>
</dbReference>
<dbReference type="GO" id="GO:0004386">
    <property type="term" value="F:helicase activity"/>
    <property type="evidence" value="ECO:0007669"/>
    <property type="project" value="UniProtKB-KW"/>
</dbReference>
<dbReference type="GO" id="GO:0042162">
    <property type="term" value="F:telomeric DNA binding"/>
    <property type="evidence" value="ECO:0007669"/>
    <property type="project" value="InterPro"/>
</dbReference>
<dbReference type="GO" id="GO:0006310">
    <property type="term" value="P:DNA recombination"/>
    <property type="evidence" value="ECO:0007669"/>
    <property type="project" value="UniProtKB-KW"/>
</dbReference>
<dbReference type="GO" id="GO:0006303">
    <property type="term" value="P:double-strand break repair via nonhomologous end joining"/>
    <property type="evidence" value="ECO:0007669"/>
    <property type="project" value="InterPro"/>
</dbReference>
<dbReference type="GO" id="GO:0000723">
    <property type="term" value="P:telomere maintenance"/>
    <property type="evidence" value="ECO:0007669"/>
    <property type="project" value="InterPro"/>
</dbReference>
<dbReference type="CDD" id="cd00873">
    <property type="entry name" value="KU80"/>
    <property type="match status" value="1"/>
</dbReference>
<dbReference type="FunFam" id="1.25.40.240:FF:000002">
    <property type="entry name" value="ATP-dependent DNA helicase II subunit 2"/>
    <property type="match status" value="1"/>
</dbReference>
<dbReference type="FunFam" id="2.40.290.10:FF:000008">
    <property type="entry name" value="ATP-dependent DNA helicase II subunit 2"/>
    <property type="match status" value="1"/>
</dbReference>
<dbReference type="FunFam" id="3.40.50.410:FF:000073">
    <property type="entry name" value="ATP-dependent DNA helicase II subunit 2"/>
    <property type="match status" value="1"/>
</dbReference>
<dbReference type="FunFam" id="1.10.1600.10:FF:000002">
    <property type="entry name" value="X-ray repair cross-complementing protein 5"/>
    <property type="match status" value="1"/>
</dbReference>
<dbReference type="Gene3D" id="1.10.1600.10">
    <property type="match status" value="1"/>
</dbReference>
<dbReference type="Gene3D" id="2.40.290.10">
    <property type="match status" value="1"/>
</dbReference>
<dbReference type="Gene3D" id="1.25.40.240">
    <property type="entry name" value="Ku, C-terminal domain"/>
    <property type="match status" value="1"/>
</dbReference>
<dbReference type="Gene3D" id="3.40.50.410">
    <property type="entry name" value="von Willebrand factor, type A domain"/>
    <property type="match status" value="1"/>
</dbReference>
<dbReference type="InterPro" id="IPR006164">
    <property type="entry name" value="Ku70/Ku80_beta-barrel_dom"/>
</dbReference>
<dbReference type="InterPro" id="IPR024193">
    <property type="entry name" value="Ku80"/>
</dbReference>
<dbReference type="InterPro" id="IPR036494">
    <property type="entry name" value="Ku_C_sf"/>
</dbReference>
<dbReference type="InterPro" id="IPR005161">
    <property type="entry name" value="Ku_N"/>
</dbReference>
<dbReference type="InterPro" id="IPR014893">
    <property type="entry name" value="Ku_PK_bind"/>
</dbReference>
<dbReference type="InterPro" id="IPR016194">
    <property type="entry name" value="SPOC-like_C_dom_sf"/>
</dbReference>
<dbReference type="InterPro" id="IPR002035">
    <property type="entry name" value="VWF_A"/>
</dbReference>
<dbReference type="InterPro" id="IPR036465">
    <property type="entry name" value="vWFA_dom_sf"/>
</dbReference>
<dbReference type="PANTHER" id="PTHR12604">
    <property type="entry name" value="KU AUTOANTIGEN DNA HELICASE"/>
    <property type="match status" value="1"/>
</dbReference>
<dbReference type="PANTHER" id="PTHR12604:SF4">
    <property type="entry name" value="X-RAY REPAIR CROSS-COMPLEMENTING PROTEIN 5"/>
    <property type="match status" value="1"/>
</dbReference>
<dbReference type="Pfam" id="PF02735">
    <property type="entry name" value="Ku"/>
    <property type="match status" value="1"/>
</dbReference>
<dbReference type="Pfam" id="PF03731">
    <property type="entry name" value="Ku_N"/>
    <property type="match status" value="1"/>
</dbReference>
<dbReference type="Pfam" id="PF08785">
    <property type="entry name" value="Ku_PK_bind"/>
    <property type="match status" value="1"/>
</dbReference>
<dbReference type="PIRSF" id="PIRSF016570">
    <property type="entry name" value="Ku80"/>
    <property type="match status" value="1"/>
</dbReference>
<dbReference type="SMART" id="SM00559">
    <property type="entry name" value="Ku78"/>
    <property type="match status" value="1"/>
</dbReference>
<dbReference type="SUPFAM" id="SSF101420">
    <property type="entry name" value="C-terminal domain of Ku80"/>
    <property type="match status" value="1"/>
</dbReference>
<dbReference type="SUPFAM" id="SSF100939">
    <property type="entry name" value="SPOC domain-like"/>
    <property type="match status" value="1"/>
</dbReference>
<dbReference type="SUPFAM" id="SSF53300">
    <property type="entry name" value="vWA-like"/>
    <property type="match status" value="1"/>
</dbReference>
<feature type="chain" id="PRO_0000278352" description="ATP-dependent DNA helicase II subunit 2">
    <location>
        <begin position="1"/>
        <end position="731"/>
    </location>
</feature>
<feature type="domain" description="Ku">
    <location>
        <begin position="238"/>
        <end position="486"/>
    </location>
</feature>
<gene>
    <name type="primary">KU80</name>
    <name type="ORF">CIMG_01804</name>
</gene>
<sequence>MAEKEATVYIVDVGHSMGKCRGGRTISDLDWMMLYVWDRITTTVSTGRKTATVGVVGLRTDGSSNPLWEKDEEESYAHLSVFQEIGQMLMPDIRKLRDLVKPSNTNQGDAISSIILAIDMIVRYCKRLKYKRKIVLVTDGRSTMDSDGIDSIVSKIKEEGIELVILGVDFDDPDYGFKEEDKDPFKTKNESVLKILADDADGAYGTLAQAVEEMTTPRIKVVRGIPSFRGDLRLGDPSQYSTGLTIQVERYYRTYVARPPAASAFALSIAPPKGQSTAESSVTLQNGDSTVETANASNNLSGVRNARSYQVIDENAPGGKKEVERDDLAKGYEYGRTAVHISESDEVITKLDTTAALEFIGFIQSENYERYMNMSTSNVIIAQKINDKAILALSSMIHALFELEYYAIGRLVTKDGKPPLMVLLAPLIETDFECLLEVQLPFAEDTRSYRFPPLDKIVTVSGKVVKEHRNLPSDDLLETMGKYVEDMDLSEFDENGDPFQSLALEDCYSPLVHRIDQAIRWRAVHPTKPLPPVPKVLEKLSHWPEELVKKSHDSLRDLISISAVKKVPPKAKGRKRRREADKPLSGLNVDDLLRGEKRLKISPENPIPEFKQTLANTEDISAISDAVKQMSAIIEDQIRQSLGDINYDRAIEGIGTMREELIAYEEPGLYNDFIRGLKEKLLDDKLGGDRREMWWLIRKSRLGLIDQKALDISDITEEQAREFLSSRPTTV</sequence>
<evidence type="ECO:0000250" key="1"/>
<evidence type="ECO:0000305" key="2"/>
<proteinExistence type="inferred from homology"/>
<reference key="1">
    <citation type="journal article" date="2009" name="Genome Res.">
        <title>Comparative genomic analyses of the human fungal pathogens Coccidioides and their relatives.</title>
        <authorList>
            <person name="Sharpton T.J."/>
            <person name="Stajich J.E."/>
            <person name="Rounsley S.D."/>
            <person name="Gardner M.J."/>
            <person name="Wortman J.R."/>
            <person name="Jordar V.S."/>
            <person name="Maiti R."/>
            <person name="Kodira C.D."/>
            <person name="Neafsey D.E."/>
            <person name="Zeng Q."/>
            <person name="Hung C.-Y."/>
            <person name="McMahan C."/>
            <person name="Muszewska A."/>
            <person name="Grynberg M."/>
            <person name="Mandel M.A."/>
            <person name="Kellner E.M."/>
            <person name="Barker B.M."/>
            <person name="Galgiani J.N."/>
            <person name="Orbach M.J."/>
            <person name="Kirkland T.N."/>
            <person name="Cole G.T."/>
            <person name="Henn M.R."/>
            <person name="Birren B.W."/>
            <person name="Taylor J.W."/>
        </authorList>
    </citation>
    <scope>NUCLEOTIDE SEQUENCE [LARGE SCALE GENOMIC DNA]</scope>
    <source>
        <strain>RS</strain>
    </source>
</reference>
<reference key="2">
    <citation type="journal article" date="2010" name="Genome Res.">
        <title>Population genomic sequencing of Coccidioides fungi reveals recent hybridization and transposon control.</title>
        <authorList>
            <person name="Neafsey D.E."/>
            <person name="Barker B.M."/>
            <person name="Sharpton T.J."/>
            <person name="Stajich J.E."/>
            <person name="Park D.J."/>
            <person name="Whiston E."/>
            <person name="Hung C.-Y."/>
            <person name="McMahan C."/>
            <person name="White J."/>
            <person name="Sykes S."/>
            <person name="Heiman D."/>
            <person name="Young S."/>
            <person name="Zeng Q."/>
            <person name="Abouelleil A."/>
            <person name="Aftuck L."/>
            <person name="Bessette D."/>
            <person name="Brown A."/>
            <person name="FitzGerald M."/>
            <person name="Lui A."/>
            <person name="Macdonald J.P."/>
            <person name="Priest M."/>
            <person name="Orbach M.J."/>
            <person name="Galgiani J.N."/>
            <person name="Kirkland T.N."/>
            <person name="Cole G.T."/>
            <person name="Birren B.W."/>
            <person name="Henn M.R."/>
            <person name="Taylor J.W."/>
            <person name="Rounsley S.D."/>
        </authorList>
    </citation>
    <scope>GENOME REANNOTATION</scope>
    <source>
        <strain>RS</strain>
    </source>
</reference>
<comment type="function">
    <text evidence="1">Single-stranded DNA-dependent ATP-dependent helicase. Involved in non-homologous end joining (NHEJ) DNA double strand break repair. DNA-binding is sequence-independent but has a high affinity to nicks in double-stranded DNA and to the ends of duplex DNA. Binds to naturally occurring chromosomal ends, and therefore provides chromosomal end protection. Required also for telomere recombination to repair telomeric ends in the absence of telomerase. KU70, of the KU70/KU80 heterodimer, binds to the stem loop of TLC1, the RNA component of telomerase. Involved in telomere maintenance. Interacts with telomeric repeats and subtelomeric sequences thereby controlling telomere length and protecting against subtelomeric rearrangement. Maintains telomeric chromatin, which is involved in silencing the expression of genes located at the telomere. Required for mating-type switching (By similarity).</text>
</comment>
<comment type="catalytic activity">
    <reaction>
        <text>ATP + H2O = ADP + phosphate + H(+)</text>
        <dbReference type="Rhea" id="RHEA:13065"/>
        <dbReference type="ChEBI" id="CHEBI:15377"/>
        <dbReference type="ChEBI" id="CHEBI:15378"/>
        <dbReference type="ChEBI" id="CHEBI:30616"/>
        <dbReference type="ChEBI" id="CHEBI:43474"/>
        <dbReference type="ChEBI" id="CHEBI:456216"/>
        <dbReference type="EC" id="3.6.4.12"/>
    </reaction>
</comment>
<comment type="subunit">
    <text evidence="1">Heterodimer of Ku70 and Ku80.</text>
</comment>
<comment type="subcellular location">
    <subcellularLocation>
        <location evidence="1">Nucleus</location>
    </subcellularLocation>
    <subcellularLocation>
        <location evidence="1">Chromosome</location>
        <location evidence="1">Telomere</location>
    </subcellularLocation>
</comment>
<comment type="similarity">
    <text evidence="2">Belongs to the ku80 family.</text>
</comment>
<comment type="sequence caution" evidence="2">
    <conflict type="erroneous gene model prediction">
        <sequence resource="EMBL-CDS" id="EAS36450"/>
    </conflict>
</comment>
<keyword id="KW-0067">ATP-binding</keyword>
<keyword id="KW-0158">Chromosome</keyword>
<keyword id="KW-0227">DNA damage</keyword>
<keyword id="KW-0233">DNA recombination</keyword>
<keyword id="KW-0234">DNA repair</keyword>
<keyword id="KW-0238">DNA-binding</keyword>
<keyword id="KW-0347">Helicase</keyword>
<keyword id="KW-0378">Hydrolase</keyword>
<keyword id="KW-0547">Nucleotide-binding</keyword>
<keyword id="KW-0539">Nucleus</keyword>
<keyword id="KW-1185">Reference proteome</keyword>
<keyword id="KW-0779">Telomere</keyword>
<organism>
    <name type="scientific">Coccidioides immitis (strain RS)</name>
    <name type="common">Valley fever fungus</name>
    <dbReference type="NCBI Taxonomy" id="246410"/>
    <lineage>
        <taxon>Eukaryota</taxon>
        <taxon>Fungi</taxon>
        <taxon>Dikarya</taxon>
        <taxon>Ascomycota</taxon>
        <taxon>Pezizomycotina</taxon>
        <taxon>Eurotiomycetes</taxon>
        <taxon>Eurotiomycetidae</taxon>
        <taxon>Onygenales</taxon>
        <taxon>Onygenaceae</taxon>
        <taxon>Coccidioides</taxon>
    </lineage>
</organism>
<protein>
    <recommendedName>
        <fullName>ATP-dependent DNA helicase II subunit 2</fullName>
        <ecNumber>3.6.4.12</ecNumber>
    </recommendedName>
    <alternativeName>
        <fullName>ATP-dependent DNA helicase II subunit Ku80</fullName>
    </alternativeName>
</protein>
<accession>Q1E6K9</accession>
<accession>J3KKC6</accession>